<evidence type="ECO:0000250" key="1">
    <source>
        <dbReference type="UniProtKB" id="Q80XH4"/>
    </source>
</evidence>
<evidence type="ECO:0000255" key="2"/>
<evidence type="ECO:0000255" key="3">
    <source>
        <dbReference type="PROSITE-ProRule" id="PRU00558"/>
    </source>
</evidence>
<evidence type="ECO:0000256" key="4">
    <source>
        <dbReference type="SAM" id="MobiDB-lite"/>
    </source>
</evidence>
<evidence type="ECO:0000305" key="5"/>
<proteinExistence type="evidence at transcript level"/>
<keyword id="KW-0325">Glycoprotein</keyword>
<keyword id="KW-0333">Golgi apparatus</keyword>
<keyword id="KW-0472">Membrane</keyword>
<keyword id="KW-1185">Reference proteome</keyword>
<keyword id="KW-0677">Repeat</keyword>
<keyword id="KW-0735">Signal-anchor</keyword>
<keyword id="KW-0812">Transmembrane</keyword>
<keyword id="KW-1133">Transmembrane helix</keyword>
<feature type="chain" id="PRO_0000305063" description="Sialate:O-sulfotransferase 1">
    <location>
        <begin position="1"/>
        <end position="572"/>
    </location>
</feature>
<feature type="topological domain" description="Cytoplasmic" evidence="1">
    <location>
        <begin position="1"/>
        <end position="14"/>
    </location>
</feature>
<feature type="transmembrane region" description="Helical; Signal-anchor for type II membrane protein" evidence="2">
    <location>
        <begin position="15"/>
        <end position="35"/>
    </location>
</feature>
<feature type="topological domain" description="Extracellular" evidence="1">
    <location>
        <begin position="36"/>
        <end position="572"/>
    </location>
</feature>
<feature type="domain" description="WSC 1" evidence="3">
    <location>
        <begin position="139"/>
        <end position="231"/>
    </location>
</feature>
<feature type="domain" description="WSC 2" evidence="3">
    <location>
        <begin position="242"/>
        <end position="337"/>
    </location>
</feature>
<feature type="region of interest" description="Disordered" evidence="4">
    <location>
        <begin position="116"/>
        <end position="135"/>
    </location>
</feature>
<feature type="glycosylation site" description="N-linked (GlcNAc...) asparagine" evidence="2">
    <location>
        <position position="105"/>
    </location>
</feature>
<feature type="glycosylation site" description="N-linked (GlcNAc...) asparagine" evidence="2">
    <location>
        <position position="254"/>
    </location>
</feature>
<feature type="glycosylation site" description="N-linked (GlcNAc...) asparagine" evidence="2">
    <location>
        <position position="345"/>
    </location>
</feature>
<gene>
    <name type="primary">Wscd1</name>
</gene>
<protein>
    <recommendedName>
        <fullName evidence="1">Sialate:O-sulfotransferase 1</fullName>
    </recommendedName>
    <alternativeName>
        <fullName>WSC domain-containing protein 1</fullName>
    </alternativeName>
</protein>
<dbReference type="EMBL" id="BC094520">
    <property type="protein sequence ID" value="AAH94520.1"/>
    <property type="molecule type" value="mRNA"/>
</dbReference>
<dbReference type="RefSeq" id="NP_001019405.1">
    <property type="nucleotide sequence ID" value="NM_001024234.2"/>
</dbReference>
<dbReference type="RefSeq" id="XP_017452591.1">
    <property type="nucleotide sequence ID" value="XM_017597102.3"/>
</dbReference>
<dbReference type="RefSeq" id="XP_017452592.1">
    <property type="nucleotide sequence ID" value="XM_017597103.3"/>
</dbReference>
<dbReference type="RefSeq" id="XP_017452593.1">
    <property type="nucleotide sequence ID" value="XM_017597104.3"/>
</dbReference>
<dbReference type="RefSeq" id="XP_017452594.1">
    <property type="nucleotide sequence ID" value="XM_017597105.3"/>
</dbReference>
<dbReference type="RefSeq" id="XP_017452595.1">
    <property type="nucleotide sequence ID" value="XM_017597106.3"/>
</dbReference>
<dbReference type="RefSeq" id="XP_017452596.1">
    <property type="nucleotide sequence ID" value="XM_017597107.1"/>
</dbReference>
<dbReference type="RefSeq" id="XP_017452597.1">
    <property type="nucleotide sequence ID" value="XM_017597108.3"/>
</dbReference>
<dbReference type="RefSeq" id="XP_017452598.1">
    <property type="nucleotide sequence ID" value="XM_017597109.1"/>
</dbReference>
<dbReference type="RefSeq" id="XP_063124736.1">
    <property type="nucleotide sequence ID" value="XM_063268666.1"/>
</dbReference>
<dbReference type="RefSeq" id="XP_063124737.1">
    <property type="nucleotide sequence ID" value="XM_063268667.1"/>
</dbReference>
<dbReference type="SMR" id="Q505J3"/>
<dbReference type="FunCoup" id="Q505J3">
    <property type="interactions" value="749"/>
</dbReference>
<dbReference type="STRING" id="10116.ENSRNOP00000010358"/>
<dbReference type="GlyCosmos" id="Q505J3">
    <property type="glycosylation" value="3 sites, No reported glycans"/>
</dbReference>
<dbReference type="GlyGen" id="Q505J3">
    <property type="glycosylation" value="4 sites"/>
</dbReference>
<dbReference type="iPTMnet" id="Q505J3"/>
<dbReference type="PhosphoSitePlus" id="Q505J3"/>
<dbReference type="PaxDb" id="10116-ENSRNOP00000010358"/>
<dbReference type="Ensembl" id="ENSRNOT00000010358.7">
    <property type="protein sequence ID" value="ENSRNOP00000010358.4"/>
    <property type="gene ID" value="ENSRNOG00000007869.8"/>
</dbReference>
<dbReference type="GeneID" id="287466"/>
<dbReference type="KEGG" id="rno:287466"/>
<dbReference type="UCSC" id="RGD:1308212">
    <property type="organism name" value="rat"/>
</dbReference>
<dbReference type="AGR" id="RGD:1308212"/>
<dbReference type="CTD" id="23302"/>
<dbReference type="RGD" id="1308212">
    <property type="gene designation" value="Wscd1"/>
</dbReference>
<dbReference type="eggNOG" id="KOG4157">
    <property type="taxonomic scope" value="Eukaryota"/>
</dbReference>
<dbReference type="GeneTree" id="ENSGT00940000158096"/>
<dbReference type="InParanoid" id="Q505J3"/>
<dbReference type="OMA" id="KYAGHLG"/>
<dbReference type="OrthoDB" id="5985073at2759"/>
<dbReference type="PhylomeDB" id="Q505J3"/>
<dbReference type="TreeFam" id="TF324060"/>
<dbReference type="PRO" id="PR:Q505J3"/>
<dbReference type="Proteomes" id="UP000002494">
    <property type="component" value="Chromosome 10"/>
</dbReference>
<dbReference type="Bgee" id="ENSRNOG00000007869">
    <property type="expression patterns" value="Expressed in Ammon's horn and 19 other cell types or tissues"/>
</dbReference>
<dbReference type="GO" id="GO:0000139">
    <property type="term" value="C:Golgi membrane"/>
    <property type="evidence" value="ECO:0000250"/>
    <property type="project" value="UniProtKB"/>
</dbReference>
<dbReference type="GO" id="GO:0008146">
    <property type="term" value="F:sulfotransferase activity"/>
    <property type="evidence" value="ECO:0000250"/>
    <property type="project" value="UniProtKB"/>
</dbReference>
<dbReference type="Gene3D" id="3.40.50.300">
    <property type="entry name" value="P-loop containing nucleotide triphosphate hydrolases"/>
    <property type="match status" value="1"/>
</dbReference>
<dbReference type="InterPro" id="IPR027417">
    <property type="entry name" value="P-loop_NTPase"/>
</dbReference>
<dbReference type="InterPro" id="IPR051589">
    <property type="entry name" value="Sialate-O-sulfotransferase"/>
</dbReference>
<dbReference type="InterPro" id="IPR000863">
    <property type="entry name" value="Sulfotransferase_dom"/>
</dbReference>
<dbReference type="InterPro" id="IPR002889">
    <property type="entry name" value="WSC_carb-bd"/>
</dbReference>
<dbReference type="PANTHER" id="PTHR45964:SF8">
    <property type="entry name" value="SIALATE:O-SULFOTRANSFERASE 1"/>
    <property type="match status" value="1"/>
</dbReference>
<dbReference type="PANTHER" id="PTHR45964">
    <property type="entry name" value="WSCD FAMILY MEMBER CG9164"/>
    <property type="match status" value="1"/>
</dbReference>
<dbReference type="Pfam" id="PF00685">
    <property type="entry name" value="Sulfotransfer_1"/>
    <property type="match status" value="1"/>
</dbReference>
<dbReference type="Pfam" id="PF01822">
    <property type="entry name" value="WSC"/>
    <property type="match status" value="2"/>
</dbReference>
<dbReference type="SMART" id="SM00321">
    <property type="entry name" value="WSC"/>
    <property type="match status" value="2"/>
</dbReference>
<dbReference type="SUPFAM" id="SSF52540">
    <property type="entry name" value="P-loop containing nucleoside triphosphate hydrolases"/>
    <property type="match status" value="1"/>
</dbReference>
<dbReference type="PROSITE" id="PS51212">
    <property type="entry name" value="WSC"/>
    <property type="match status" value="2"/>
</dbReference>
<accession>Q505J3</accession>
<organism>
    <name type="scientific">Rattus norvegicus</name>
    <name type="common">Rat</name>
    <dbReference type="NCBI Taxonomy" id="10116"/>
    <lineage>
        <taxon>Eukaryota</taxon>
        <taxon>Metazoa</taxon>
        <taxon>Chordata</taxon>
        <taxon>Craniata</taxon>
        <taxon>Vertebrata</taxon>
        <taxon>Euteleostomi</taxon>
        <taxon>Mammalia</taxon>
        <taxon>Eutheria</taxon>
        <taxon>Euarchontoglires</taxon>
        <taxon>Glires</taxon>
        <taxon>Rodentia</taxon>
        <taxon>Myomorpha</taxon>
        <taxon>Muroidea</taxon>
        <taxon>Muridae</taxon>
        <taxon>Murinae</taxon>
        <taxon>Rattus</taxon>
    </lineage>
</organism>
<reference key="1">
    <citation type="journal article" date="2004" name="Genome Res.">
        <title>The status, quality, and expansion of the NIH full-length cDNA project: the Mammalian Gene Collection (MGC).</title>
        <authorList>
            <consortium name="The MGC Project Team"/>
        </authorList>
    </citation>
    <scope>NUCLEOTIDE SEQUENCE [LARGE SCALE MRNA]</scope>
    <source>
        <tissue>Brain</tissue>
    </source>
</reference>
<name>WSCD1_RAT</name>
<comment type="function">
    <text evidence="1">Sialate:O-sulfotransferase which catalyzes 8-O-sulfation at the Sia-glycan level using 3'-phosphoadenosine 5'-phosphosulfate (PAPS) as a donor, forming 8-O-sulfated Sia (Sia8S)-glycans. Displays selectivity toward glycolipids such as GM1 gangliosides.</text>
</comment>
<comment type="catalytic activity">
    <reaction evidence="1">
        <text>a ganglioside GM1b + 3'-phosphoadenylyl sulfate = an 8-O-sulfo-ganglioside GM1b + adenosine 3',5'-bisphosphate + H(+)</text>
        <dbReference type="Rhea" id="RHEA:74843"/>
        <dbReference type="ChEBI" id="CHEBI:15378"/>
        <dbReference type="ChEBI" id="CHEBI:58339"/>
        <dbReference type="ChEBI" id="CHEBI:58343"/>
        <dbReference type="ChEBI" id="CHEBI:90151"/>
        <dbReference type="ChEBI" id="CHEBI:194084"/>
    </reaction>
    <physiologicalReaction direction="left-to-right" evidence="1">
        <dbReference type="Rhea" id="RHEA:74844"/>
    </physiologicalReaction>
</comment>
<comment type="subcellular location">
    <subcellularLocation>
        <location evidence="1">Golgi apparatus membrane</location>
        <topology evidence="1">Single-pass type II membrane protein</topology>
    </subcellularLocation>
</comment>
<comment type="similarity">
    <text evidence="5">Belongs to the WSCD family.</text>
</comment>
<sequence>MAKPFFRLQKFLRRTQFLLLFLTAAYLMTGSLLLLQRARVALPQALRAPGSLQALPVATVALGVGLLDSRSLHDPHSSPDLLLDVDTLRSPLARVPPGIRWPRRNRSSLRRRWLHHLTSDPQGPPTLGPEASGPASHNQGNYLGCFSEEGQERTLKGAVFYDLRKMTVSHCQEACAERSYVYAGLEAGAECYCGNRLPATRVSLKECNQECKGEKGSMCGALHRLSVYSVGLQQSGAKKRWTATYRGCFPLPENITRTFSSSMTQANVTVETCSGFCSQKEFPLAILRGWACYCAYPTPQFSLRDAVDGALCSQGTEAQGLPGYCEVYQTPVQDTRCTDRKFLPNKSKVFVALSSFPGAGNTWARHLIEHATGFYTGSYYFDGTLYNKGFKGEKDHWRSRRTICVKTHESGRREIEMFDSAILLIRNPYRSLVAEFNRKCAGHLGYAPDRNWKSKEWPDFVNSYASWWSSHVLDWLKYGKRLLVVHYEELRHSLVPTLREMVAFLNVSVSEERLLCVENNKEGSFRRRGRHPHDQEPFTPEMKDLINGYIRTVDQALRDHNWAGLPREYVPR</sequence>